<proteinExistence type="inferred from homology"/>
<reference key="1">
    <citation type="journal article" date="2006" name="BMC Genomics">
        <title>Complete plastid genome sequence of Daucus carota: implications for biotechnology and phylogeny of angiosperms.</title>
        <authorList>
            <person name="Ruhlman T."/>
            <person name="Lee S.-B."/>
            <person name="Jansen R.K."/>
            <person name="Hostetler J.B."/>
            <person name="Tallon L.J."/>
            <person name="Town C.D."/>
            <person name="Daniell H."/>
        </authorList>
    </citation>
    <scope>NUCLEOTIDE SEQUENCE [LARGE SCALE GENOMIC DNA]</scope>
    <source>
        <strain>cv. Danvers Half-long</strain>
    </source>
</reference>
<keyword id="KW-0066">ATP synthesis</keyword>
<keyword id="KW-0139">CF(1)</keyword>
<keyword id="KW-0150">Chloroplast</keyword>
<keyword id="KW-0375">Hydrogen ion transport</keyword>
<keyword id="KW-0406">Ion transport</keyword>
<keyword id="KW-0472">Membrane</keyword>
<keyword id="KW-0934">Plastid</keyword>
<keyword id="KW-0793">Thylakoid</keyword>
<keyword id="KW-0813">Transport</keyword>
<dbReference type="EMBL" id="DQ898156">
    <property type="protein sequence ID" value="ABI32430.1"/>
    <property type="molecule type" value="Genomic_DNA"/>
</dbReference>
<dbReference type="RefSeq" id="YP_740123.1">
    <property type="nucleotide sequence ID" value="NC_008325.1"/>
</dbReference>
<dbReference type="SMR" id="Q0G9V6"/>
<dbReference type="GeneID" id="4266749"/>
<dbReference type="GO" id="GO:0009535">
    <property type="term" value="C:chloroplast thylakoid membrane"/>
    <property type="evidence" value="ECO:0007669"/>
    <property type="project" value="UniProtKB-SubCell"/>
</dbReference>
<dbReference type="GO" id="GO:0045259">
    <property type="term" value="C:proton-transporting ATP synthase complex"/>
    <property type="evidence" value="ECO:0007669"/>
    <property type="project" value="UniProtKB-KW"/>
</dbReference>
<dbReference type="GO" id="GO:0005524">
    <property type="term" value="F:ATP binding"/>
    <property type="evidence" value="ECO:0007669"/>
    <property type="project" value="UniProtKB-UniRule"/>
</dbReference>
<dbReference type="GO" id="GO:0046933">
    <property type="term" value="F:proton-transporting ATP synthase activity, rotational mechanism"/>
    <property type="evidence" value="ECO:0007669"/>
    <property type="project" value="UniProtKB-UniRule"/>
</dbReference>
<dbReference type="CDD" id="cd12152">
    <property type="entry name" value="F1-ATPase_delta"/>
    <property type="match status" value="1"/>
</dbReference>
<dbReference type="FunFam" id="2.60.15.10:FF:000002">
    <property type="entry name" value="ATP synthase epsilon chain, chloroplastic"/>
    <property type="match status" value="1"/>
</dbReference>
<dbReference type="Gene3D" id="6.10.140.480">
    <property type="match status" value="1"/>
</dbReference>
<dbReference type="Gene3D" id="2.60.15.10">
    <property type="entry name" value="F0F1 ATP synthase delta/epsilon subunit, N-terminal"/>
    <property type="match status" value="1"/>
</dbReference>
<dbReference type="HAMAP" id="MF_00530">
    <property type="entry name" value="ATP_synth_epsil_bac"/>
    <property type="match status" value="1"/>
</dbReference>
<dbReference type="InterPro" id="IPR001469">
    <property type="entry name" value="ATP_synth_F1_dsu/esu"/>
</dbReference>
<dbReference type="InterPro" id="IPR020546">
    <property type="entry name" value="ATP_synth_F1_dsu/esu_N"/>
</dbReference>
<dbReference type="InterPro" id="IPR020547">
    <property type="entry name" value="ATP_synth_F1_esu_C"/>
</dbReference>
<dbReference type="InterPro" id="IPR036771">
    <property type="entry name" value="ATPsynth_dsu/esu_N"/>
</dbReference>
<dbReference type="NCBIfam" id="TIGR01216">
    <property type="entry name" value="ATP_synt_epsi"/>
    <property type="match status" value="1"/>
</dbReference>
<dbReference type="PANTHER" id="PTHR13822">
    <property type="entry name" value="ATP SYNTHASE DELTA/EPSILON CHAIN"/>
    <property type="match status" value="1"/>
</dbReference>
<dbReference type="PANTHER" id="PTHR13822:SF10">
    <property type="entry name" value="ATP SYNTHASE EPSILON CHAIN, CHLOROPLASTIC"/>
    <property type="match status" value="1"/>
</dbReference>
<dbReference type="Pfam" id="PF00401">
    <property type="entry name" value="ATP-synt_DE"/>
    <property type="match status" value="1"/>
</dbReference>
<dbReference type="Pfam" id="PF02823">
    <property type="entry name" value="ATP-synt_DE_N"/>
    <property type="match status" value="1"/>
</dbReference>
<dbReference type="SUPFAM" id="SSF51344">
    <property type="entry name" value="Epsilon subunit of F1F0-ATP synthase N-terminal domain"/>
    <property type="match status" value="1"/>
</dbReference>
<accession>Q0G9V6</accession>
<feature type="chain" id="PRO_0000275196" description="ATP synthase epsilon chain, chloroplastic">
    <location>
        <begin position="1"/>
        <end position="133"/>
    </location>
</feature>
<comment type="function">
    <text evidence="1">Produces ATP from ADP in the presence of a proton gradient across the membrane.</text>
</comment>
<comment type="subunit">
    <text evidence="1">F-type ATPases have 2 components, CF(1) - the catalytic core - and CF(0) - the membrane proton channel. CF(1) has five subunits: alpha(3), beta(3), gamma(1), delta(1), epsilon(1). CF(0) has three main subunits: a, b and c.</text>
</comment>
<comment type="subcellular location">
    <subcellularLocation>
        <location evidence="1">Plastid</location>
        <location evidence="1">Chloroplast thylakoid membrane</location>
        <topology evidence="1">Peripheral membrane protein</topology>
    </subcellularLocation>
</comment>
<comment type="similarity">
    <text evidence="1">Belongs to the ATPase epsilon chain family.</text>
</comment>
<gene>
    <name evidence="1" type="primary">atpE</name>
</gene>
<organism>
    <name type="scientific">Daucus carota</name>
    <name type="common">Wild carrot</name>
    <dbReference type="NCBI Taxonomy" id="4039"/>
    <lineage>
        <taxon>Eukaryota</taxon>
        <taxon>Viridiplantae</taxon>
        <taxon>Streptophyta</taxon>
        <taxon>Embryophyta</taxon>
        <taxon>Tracheophyta</taxon>
        <taxon>Spermatophyta</taxon>
        <taxon>Magnoliopsida</taxon>
        <taxon>eudicotyledons</taxon>
        <taxon>Gunneridae</taxon>
        <taxon>Pentapetalae</taxon>
        <taxon>asterids</taxon>
        <taxon>campanulids</taxon>
        <taxon>Apiales</taxon>
        <taxon>Apiaceae</taxon>
        <taxon>Apioideae</taxon>
        <taxon>Scandiceae</taxon>
        <taxon>Daucinae</taxon>
        <taxon>Daucus</taxon>
        <taxon>Daucus sect. Daucus</taxon>
    </lineage>
</organism>
<geneLocation type="chloroplast"/>
<evidence type="ECO:0000255" key="1">
    <source>
        <dbReference type="HAMAP-Rule" id="MF_00530"/>
    </source>
</evidence>
<sequence length="133" mass="14484">MTLNLCVLTPNRTVWNSKVNEIILSTNSGQIGVLPNHASVATAVDIGILKIRLDGQWLTMALMGGFAIIGNNEITVLVNDAEKGSDIDSQEAQQTLEIAEANFRKAEGKRQKIEANLALRRARTRVETINAIS</sequence>
<protein>
    <recommendedName>
        <fullName evidence="1">ATP synthase epsilon chain, chloroplastic</fullName>
    </recommendedName>
    <alternativeName>
        <fullName evidence="1">ATP synthase F1 sector epsilon subunit</fullName>
    </alternativeName>
    <alternativeName>
        <fullName evidence="1">F-ATPase epsilon subunit</fullName>
    </alternativeName>
</protein>
<name>ATPE_DAUCA</name>